<accession>Q196U4</accession>
<reference key="1">
    <citation type="journal article" date="2006" name="J. Virol.">
        <title>Genome of invertebrate iridescent virus type 3 (mosquito iridescent virus).</title>
        <authorList>
            <person name="Delhon G."/>
            <person name="Tulman E.R."/>
            <person name="Afonso C.L."/>
            <person name="Lu Z."/>
            <person name="Becnel J.J."/>
            <person name="Moser B.A."/>
            <person name="Kutish G.F."/>
            <person name="Rock D.L."/>
        </authorList>
    </citation>
    <scope>NUCLEOTIDE SEQUENCE [LARGE SCALE GENOMIC DNA]</scope>
</reference>
<proteinExistence type="predicted"/>
<sequence length="254" mass="28495">MNTNNQETSNVVKLSVSRFERSTKNRHLLPILVERFDSSSPVTEWDVHVFTDDSHPVYPVFQPLVPCVFKFAQNHRLSTNILVDAGSKVTSWSCVYSKKIHPMVVHHPERMTGSFKKQERNDISLWIGTPTRAATVATSCDSSCFSSPTNDDDEGYDVCGMYDMRPPTTKCQGCSATVSPQSNNSVDEGYDVCGMYDMRPPTTNGHHATVTVNGQNKPVTPPPGIATNPNLTWTLRKFRFFFHQEPETTSIVLY</sequence>
<name>116R_IIV3</name>
<keyword id="KW-1185">Reference proteome</keyword>
<organismHost>
    <name type="scientific">Aedes vexans</name>
    <name type="common">Inland floodwater mosquito</name>
    <name type="synonym">Culex vexans</name>
    <dbReference type="NCBI Taxonomy" id="7163"/>
</organismHost>
<organismHost>
    <name type="scientific">Culex territans</name>
    <dbReference type="NCBI Taxonomy" id="42431"/>
</organismHost>
<organismHost>
    <name type="scientific">Culiseta annulata</name>
    <dbReference type="NCBI Taxonomy" id="332058"/>
</organismHost>
<organismHost>
    <name type="scientific">Ochlerotatus sollicitans</name>
    <name type="common">eastern saltmarsh mosquito</name>
    <dbReference type="NCBI Taxonomy" id="310513"/>
</organismHost>
<organismHost>
    <name type="scientific">Ochlerotatus taeniorhynchus</name>
    <name type="common">Black salt marsh mosquito</name>
    <name type="synonym">Aedes taeniorhynchus</name>
    <dbReference type="NCBI Taxonomy" id="329105"/>
</organismHost>
<organismHost>
    <name type="scientific">Psorophora ferox</name>
    <dbReference type="NCBI Taxonomy" id="7183"/>
</organismHost>
<protein>
    <recommendedName>
        <fullName>Uncharacterized protein 116R</fullName>
    </recommendedName>
</protein>
<dbReference type="EMBL" id="DQ643392">
    <property type="protein sequence ID" value="ABF82146.1"/>
    <property type="molecule type" value="Genomic_DNA"/>
</dbReference>
<dbReference type="RefSeq" id="YP_654688.1">
    <property type="nucleotide sequence ID" value="NC_008187.1"/>
</dbReference>
<dbReference type="KEGG" id="vg:4156327"/>
<dbReference type="Proteomes" id="UP000001358">
    <property type="component" value="Genome"/>
</dbReference>
<gene>
    <name type="ORF">IIV3-116R</name>
</gene>
<feature type="chain" id="PRO_0000377815" description="Uncharacterized protein 116R">
    <location>
        <begin position="1"/>
        <end position="254"/>
    </location>
</feature>
<organism>
    <name type="scientific">Invertebrate iridescent virus 3</name>
    <name type="common">IIV-3</name>
    <name type="synonym">Mosquito iridescent virus</name>
    <dbReference type="NCBI Taxonomy" id="345201"/>
    <lineage>
        <taxon>Viruses</taxon>
        <taxon>Varidnaviria</taxon>
        <taxon>Bamfordvirae</taxon>
        <taxon>Nucleocytoviricota</taxon>
        <taxon>Megaviricetes</taxon>
        <taxon>Pimascovirales</taxon>
        <taxon>Iridoviridae</taxon>
        <taxon>Betairidovirinae</taxon>
        <taxon>Chloriridovirus</taxon>
    </lineage>
</organism>